<accession>Q92GB8</accession>
<keyword id="KW-0997">Cell inner membrane</keyword>
<keyword id="KW-1003">Cell membrane</keyword>
<keyword id="KW-0963">Cytoplasm</keyword>
<keyword id="KW-0342">GTP-binding</keyword>
<keyword id="KW-0378">Hydrolase</keyword>
<keyword id="KW-0472">Membrane</keyword>
<keyword id="KW-0547">Nucleotide-binding</keyword>
<keyword id="KW-0675">Receptor</keyword>
<organism>
    <name type="scientific">Rickettsia conorii (strain ATCC VR-613 / Malish 7)</name>
    <dbReference type="NCBI Taxonomy" id="272944"/>
    <lineage>
        <taxon>Bacteria</taxon>
        <taxon>Pseudomonadati</taxon>
        <taxon>Pseudomonadota</taxon>
        <taxon>Alphaproteobacteria</taxon>
        <taxon>Rickettsiales</taxon>
        <taxon>Rickettsiaceae</taxon>
        <taxon>Rickettsieae</taxon>
        <taxon>Rickettsia</taxon>
        <taxon>spotted fever group</taxon>
    </lineage>
</organism>
<reference key="1">
    <citation type="journal article" date="2001" name="Science">
        <title>Mechanisms of evolution in Rickettsia conorii and R. prowazekii.</title>
        <authorList>
            <person name="Ogata H."/>
            <person name="Audic S."/>
            <person name="Renesto-Audiffren P."/>
            <person name="Fournier P.-E."/>
            <person name="Barbe V."/>
            <person name="Samson D."/>
            <person name="Roux V."/>
            <person name="Cossart P."/>
            <person name="Weissenbach J."/>
            <person name="Claverie J.-M."/>
            <person name="Raoult D."/>
        </authorList>
    </citation>
    <scope>NUCLEOTIDE SEQUENCE [LARGE SCALE GENOMIC DNA]</scope>
    <source>
        <strain>ATCC VR-613 / Malish 7</strain>
    </source>
</reference>
<dbReference type="EC" id="3.6.5.4" evidence="1"/>
<dbReference type="EMBL" id="AE006914">
    <property type="protein sequence ID" value="AAL03743.1"/>
    <property type="molecule type" value="Genomic_DNA"/>
</dbReference>
<dbReference type="PIR" id="E97850">
    <property type="entry name" value="E97850"/>
</dbReference>
<dbReference type="RefSeq" id="WP_010977770.1">
    <property type="nucleotide sequence ID" value="NC_003103.1"/>
</dbReference>
<dbReference type="SMR" id="Q92GB8"/>
<dbReference type="GeneID" id="928527"/>
<dbReference type="KEGG" id="rco:RC1205"/>
<dbReference type="PATRIC" id="fig|272944.4.peg.1380"/>
<dbReference type="HOGENOM" id="CLU_009301_3_0_5"/>
<dbReference type="Proteomes" id="UP000000816">
    <property type="component" value="Chromosome"/>
</dbReference>
<dbReference type="GO" id="GO:0005737">
    <property type="term" value="C:cytoplasm"/>
    <property type="evidence" value="ECO:0007669"/>
    <property type="project" value="UniProtKB-SubCell"/>
</dbReference>
<dbReference type="GO" id="GO:0005886">
    <property type="term" value="C:plasma membrane"/>
    <property type="evidence" value="ECO:0007669"/>
    <property type="project" value="UniProtKB-SubCell"/>
</dbReference>
<dbReference type="GO" id="GO:0016887">
    <property type="term" value="F:ATP hydrolysis activity"/>
    <property type="evidence" value="ECO:0007669"/>
    <property type="project" value="InterPro"/>
</dbReference>
<dbReference type="GO" id="GO:0005525">
    <property type="term" value="F:GTP binding"/>
    <property type="evidence" value="ECO:0007669"/>
    <property type="project" value="UniProtKB-UniRule"/>
</dbReference>
<dbReference type="GO" id="GO:0003924">
    <property type="term" value="F:GTPase activity"/>
    <property type="evidence" value="ECO:0007669"/>
    <property type="project" value="UniProtKB-UniRule"/>
</dbReference>
<dbReference type="GO" id="GO:0005047">
    <property type="term" value="F:signal recognition particle binding"/>
    <property type="evidence" value="ECO:0007669"/>
    <property type="project" value="TreeGrafter"/>
</dbReference>
<dbReference type="GO" id="GO:0006614">
    <property type="term" value="P:SRP-dependent cotranslational protein targeting to membrane"/>
    <property type="evidence" value="ECO:0007669"/>
    <property type="project" value="InterPro"/>
</dbReference>
<dbReference type="CDD" id="cd17874">
    <property type="entry name" value="FtsY"/>
    <property type="match status" value="1"/>
</dbReference>
<dbReference type="FunFam" id="3.40.50.300:FF:000053">
    <property type="entry name" value="Signal recognition particle receptor FtsY"/>
    <property type="match status" value="1"/>
</dbReference>
<dbReference type="Gene3D" id="3.40.50.300">
    <property type="entry name" value="P-loop containing nucleotide triphosphate hydrolases"/>
    <property type="match status" value="1"/>
</dbReference>
<dbReference type="Gene3D" id="1.20.120.140">
    <property type="entry name" value="Signal recognition particle SRP54, nucleotide-binding domain"/>
    <property type="match status" value="1"/>
</dbReference>
<dbReference type="HAMAP" id="MF_00920">
    <property type="entry name" value="FtsY"/>
    <property type="match status" value="1"/>
</dbReference>
<dbReference type="InterPro" id="IPR003593">
    <property type="entry name" value="AAA+_ATPase"/>
</dbReference>
<dbReference type="InterPro" id="IPR027417">
    <property type="entry name" value="P-loop_NTPase"/>
</dbReference>
<dbReference type="InterPro" id="IPR013822">
    <property type="entry name" value="Signal_recog_particl_SRP54_hlx"/>
</dbReference>
<dbReference type="InterPro" id="IPR004390">
    <property type="entry name" value="SR_rcpt_FtsY"/>
</dbReference>
<dbReference type="InterPro" id="IPR036225">
    <property type="entry name" value="SRP/SRP_N"/>
</dbReference>
<dbReference type="InterPro" id="IPR000897">
    <property type="entry name" value="SRP54_GTPase_dom"/>
</dbReference>
<dbReference type="InterPro" id="IPR042101">
    <property type="entry name" value="SRP54_N_sf"/>
</dbReference>
<dbReference type="NCBIfam" id="TIGR00064">
    <property type="entry name" value="ftsY"/>
    <property type="match status" value="1"/>
</dbReference>
<dbReference type="PANTHER" id="PTHR43134">
    <property type="entry name" value="SIGNAL RECOGNITION PARTICLE RECEPTOR SUBUNIT ALPHA"/>
    <property type="match status" value="1"/>
</dbReference>
<dbReference type="PANTHER" id="PTHR43134:SF1">
    <property type="entry name" value="SIGNAL RECOGNITION PARTICLE RECEPTOR SUBUNIT ALPHA"/>
    <property type="match status" value="1"/>
</dbReference>
<dbReference type="Pfam" id="PF00448">
    <property type="entry name" value="SRP54"/>
    <property type="match status" value="1"/>
</dbReference>
<dbReference type="Pfam" id="PF02881">
    <property type="entry name" value="SRP54_N"/>
    <property type="match status" value="1"/>
</dbReference>
<dbReference type="SMART" id="SM00382">
    <property type="entry name" value="AAA"/>
    <property type="match status" value="1"/>
</dbReference>
<dbReference type="SMART" id="SM00962">
    <property type="entry name" value="SRP54"/>
    <property type="match status" value="1"/>
</dbReference>
<dbReference type="SMART" id="SM00963">
    <property type="entry name" value="SRP54_N"/>
    <property type="match status" value="1"/>
</dbReference>
<dbReference type="SUPFAM" id="SSF47364">
    <property type="entry name" value="Domain of the SRP/SRP receptor G-proteins"/>
    <property type="match status" value="1"/>
</dbReference>
<dbReference type="SUPFAM" id="SSF52540">
    <property type="entry name" value="P-loop containing nucleoside triphosphate hydrolases"/>
    <property type="match status" value="1"/>
</dbReference>
<dbReference type="PROSITE" id="PS00300">
    <property type="entry name" value="SRP54"/>
    <property type="match status" value="1"/>
</dbReference>
<sequence length="303" mass="33137">MISIFSKLKQSLSKTSNKISEGIDKIFYKKKLDAGTLEELEELLISSDMSVLVVTNIIEEFKKVKFDKEIDSDTVKEALAKLIEQQLSKSAIPFTLSENKLNVILVCGVNGAGKTTTIGKLASMYSAQGKKVAVAACDTFRAAAVNQLSTWADRANALLITGEESADPASVAYRGMEESIKQNIDILFIDTAGRLHNKKNLMDELSKIVKVIKKLDENAPTHSVLVIDAITGQNTYNQVEHFNDATNLTGLIVTKLDGSAKAGVIVGVVQKFNLPLYFIGIGEKIEDLKIFNQHDFARNLVGL</sequence>
<proteinExistence type="inferred from homology"/>
<protein>
    <recommendedName>
        <fullName evidence="1">Signal recognition particle receptor FtsY</fullName>
        <shortName evidence="1">SRP receptor</shortName>
        <ecNumber evidence="1">3.6.5.4</ecNumber>
    </recommendedName>
</protein>
<evidence type="ECO:0000255" key="1">
    <source>
        <dbReference type="HAMAP-Rule" id="MF_00920"/>
    </source>
</evidence>
<feature type="chain" id="PRO_0000286495" description="Signal recognition particle receptor FtsY">
    <location>
        <begin position="1"/>
        <end position="303"/>
    </location>
</feature>
<feature type="binding site" evidence="1">
    <location>
        <begin position="108"/>
        <end position="115"/>
    </location>
    <ligand>
        <name>GTP</name>
        <dbReference type="ChEBI" id="CHEBI:37565"/>
    </ligand>
</feature>
<feature type="binding site" evidence="1">
    <location>
        <begin position="190"/>
        <end position="194"/>
    </location>
    <ligand>
        <name>GTP</name>
        <dbReference type="ChEBI" id="CHEBI:37565"/>
    </ligand>
</feature>
<feature type="binding site" evidence="1">
    <location>
        <begin position="254"/>
        <end position="257"/>
    </location>
    <ligand>
        <name>GTP</name>
        <dbReference type="ChEBI" id="CHEBI:37565"/>
    </ligand>
</feature>
<gene>
    <name evidence="1" type="primary">ftsY</name>
    <name type="ordered locus">RC1205</name>
</gene>
<comment type="function">
    <text evidence="1">Involved in targeting and insertion of nascent membrane proteins into the cytoplasmic membrane. Acts as a receptor for the complex formed by the signal recognition particle (SRP) and the ribosome-nascent chain (RNC). Interaction with SRP-RNC leads to the transfer of the RNC complex to the Sec translocase for insertion into the membrane, the hydrolysis of GTP by both Ffh and FtsY, and the dissociation of the SRP-FtsY complex into the individual components.</text>
</comment>
<comment type="catalytic activity">
    <reaction evidence="1">
        <text>GTP + H2O = GDP + phosphate + H(+)</text>
        <dbReference type="Rhea" id="RHEA:19669"/>
        <dbReference type="ChEBI" id="CHEBI:15377"/>
        <dbReference type="ChEBI" id="CHEBI:15378"/>
        <dbReference type="ChEBI" id="CHEBI:37565"/>
        <dbReference type="ChEBI" id="CHEBI:43474"/>
        <dbReference type="ChEBI" id="CHEBI:58189"/>
        <dbReference type="EC" id="3.6.5.4"/>
    </reaction>
</comment>
<comment type="subunit">
    <text evidence="1">Part of the signal recognition particle protein translocation system, which is composed of SRP and FtsY. SRP is a ribonucleoprotein composed of Ffh and a 4.5S RNA molecule.</text>
</comment>
<comment type="subcellular location">
    <subcellularLocation>
        <location>Cell inner membrane</location>
        <topology>Peripheral membrane protein</topology>
        <orientation>Cytoplasmic side</orientation>
    </subcellularLocation>
    <subcellularLocation>
        <location evidence="1">Cytoplasm</location>
    </subcellularLocation>
</comment>
<comment type="similarity">
    <text evidence="1">Belongs to the GTP-binding SRP family. FtsY subfamily.</text>
</comment>
<name>FTSY_RICCN</name>